<feature type="chain" id="PRO_0000385371" description="Probable zinc transporter protein DDB_G0269332">
    <location>
        <begin position="1"/>
        <end position="614"/>
    </location>
</feature>
<feature type="topological domain" description="Cytoplasmic" evidence="2">
    <location>
        <begin position="1"/>
        <end position="203"/>
    </location>
</feature>
<feature type="transmembrane region" description="Helical" evidence="2">
    <location>
        <begin position="204"/>
        <end position="224"/>
    </location>
</feature>
<feature type="topological domain" description="Extracellular" evidence="2">
    <location>
        <begin position="225"/>
        <end position="233"/>
    </location>
</feature>
<feature type="transmembrane region" description="Helical" evidence="2">
    <location>
        <begin position="234"/>
        <end position="254"/>
    </location>
</feature>
<feature type="topological domain" description="Cytoplasmic" evidence="2">
    <location>
        <begin position="255"/>
        <end position="270"/>
    </location>
</feature>
<feature type="transmembrane region" description="Helical" evidence="2">
    <location>
        <begin position="271"/>
        <end position="291"/>
    </location>
</feature>
<feature type="topological domain" description="Extracellular" evidence="2">
    <location>
        <begin position="292"/>
        <end position="306"/>
    </location>
</feature>
<feature type="transmembrane region" description="Helical" evidence="2">
    <location>
        <begin position="307"/>
        <end position="327"/>
    </location>
</feature>
<feature type="topological domain" description="Cytoplasmic" evidence="2">
    <location>
        <begin position="328"/>
        <end position="351"/>
    </location>
</feature>
<feature type="transmembrane region" description="Helical" evidence="2">
    <location>
        <begin position="352"/>
        <end position="372"/>
    </location>
</feature>
<feature type="topological domain" description="Extracellular" evidence="2">
    <location>
        <begin position="373"/>
        <end position="377"/>
    </location>
</feature>
<feature type="transmembrane region" description="Helical" evidence="2">
    <location>
        <begin position="378"/>
        <end position="398"/>
    </location>
</feature>
<feature type="topological domain" description="Cytoplasmic" evidence="2">
    <location>
        <begin position="399"/>
        <end position="614"/>
    </location>
</feature>
<feature type="region of interest" description="Disordered" evidence="3">
    <location>
        <begin position="1"/>
        <end position="103"/>
    </location>
</feature>
<feature type="region of interest" description="Disordered" evidence="3">
    <location>
        <begin position="115"/>
        <end position="178"/>
    </location>
</feature>
<feature type="region of interest" description="Disordered" evidence="3">
    <location>
        <begin position="483"/>
        <end position="614"/>
    </location>
</feature>
<feature type="compositionally biased region" description="Low complexity" evidence="3">
    <location>
        <begin position="17"/>
        <end position="64"/>
    </location>
</feature>
<feature type="compositionally biased region" description="Basic residues" evidence="3">
    <location>
        <begin position="80"/>
        <end position="92"/>
    </location>
</feature>
<feature type="compositionally biased region" description="Low complexity" evidence="3">
    <location>
        <begin position="121"/>
        <end position="176"/>
    </location>
</feature>
<feature type="compositionally biased region" description="Basic residues" evidence="3">
    <location>
        <begin position="487"/>
        <end position="499"/>
    </location>
</feature>
<feature type="compositionally biased region" description="Basic residues" evidence="3">
    <location>
        <begin position="507"/>
        <end position="523"/>
    </location>
</feature>
<feature type="compositionally biased region" description="Basic and acidic residues" evidence="3">
    <location>
        <begin position="525"/>
        <end position="535"/>
    </location>
</feature>
<feature type="compositionally biased region" description="Polar residues" evidence="3">
    <location>
        <begin position="548"/>
        <end position="567"/>
    </location>
</feature>
<feature type="compositionally biased region" description="Acidic residues" evidence="3">
    <location>
        <begin position="575"/>
        <end position="585"/>
    </location>
</feature>
<feature type="compositionally biased region" description="Basic and acidic residues" evidence="3">
    <location>
        <begin position="586"/>
        <end position="599"/>
    </location>
</feature>
<feature type="compositionally biased region" description="Basic residues" evidence="3">
    <location>
        <begin position="600"/>
        <end position="614"/>
    </location>
</feature>
<organism>
    <name type="scientific">Dictyostelium discoideum</name>
    <name type="common">Social amoeba</name>
    <dbReference type="NCBI Taxonomy" id="44689"/>
    <lineage>
        <taxon>Eukaryota</taxon>
        <taxon>Amoebozoa</taxon>
        <taxon>Evosea</taxon>
        <taxon>Eumycetozoa</taxon>
        <taxon>Dictyostelia</taxon>
        <taxon>Dictyosteliales</taxon>
        <taxon>Dictyosteliaceae</taxon>
        <taxon>Dictyostelium</taxon>
    </lineage>
</organism>
<proteinExistence type="inferred from homology"/>
<sequence>MSDINSNSYDPYHHPQQHQQESQYHPQQQQQQQQQQQQQQEYYNQQHQQESQYQQQSPPQQQYDNHQHHQQDLNQAHNSGHGRSHNSGHGHSHGNNYSGLPHLRTQVGHAQPYFSSYNELNNSGDISNSNNNNNNNNQYNYNNNNNNNNYNNNINNNQFNSSVYNNNNNNNNNNNNEFSIDGKSGITIKHLLNNLNRDSDAKKLAAWISVMLVFTIYEIFYGAYLESLGLVSDGFHALFDCIGMGIALLAMLVGKRGISNQEYTYGYDRWEVLGTFSNGCFLLFVSFFLFLESIERLLEPPHIHNHGRVMSLATISLIINIVGVLFFKQKSNERKQQSSIRSENLLTISHHILVDSCTSLGVILSSLVGQAFGLEISDSLISIIIACIIVYNALPICIKTSAILLQTTPDQLKININNAIKDILVMEGVIDVTDKHFWSHSPGNIIATVNLLTKKNCDDFTLTQSIRNRLSFVQDLTIQLDKEGKHNSHSHGGAHHHPHEHKEDKKSHNHSHGHNHGHSHGHSHGGNDDHEHGENCDEEHEPVPKYQVQPTSPFSSHYTDIHSNNTPIPLYKSEQDDEDDEDDYDHDEHHHDHDHDEHHHGHSHNSSHSHAHNH</sequence>
<gene>
    <name type="ORF">DDB_G0269332</name>
</gene>
<protein>
    <recommendedName>
        <fullName>Probable zinc transporter protein DDB_G0269332</fullName>
    </recommendedName>
</protein>
<comment type="function">
    <text evidence="1">May be involved in zinc transport from the cytoplasm to either intracellular organelles or extracellular spaces.</text>
</comment>
<comment type="subcellular location">
    <subcellularLocation>
        <location evidence="4">Membrane</location>
        <topology evidence="4">Multi-pass membrane protein</topology>
    </subcellularLocation>
</comment>
<comment type="similarity">
    <text evidence="4">Belongs to the cation diffusion facilitator (CDF) transporter (TC 2.A.4) family. SLC30A subfamily.</text>
</comment>
<evidence type="ECO:0000250" key="1"/>
<evidence type="ECO:0000255" key="2"/>
<evidence type="ECO:0000256" key="3">
    <source>
        <dbReference type="SAM" id="MobiDB-lite"/>
    </source>
</evidence>
<evidence type="ECO:0000305" key="4"/>
<reference key="1">
    <citation type="journal article" date="2005" name="Nature">
        <title>The genome of the social amoeba Dictyostelium discoideum.</title>
        <authorList>
            <person name="Eichinger L."/>
            <person name="Pachebat J.A."/>
            <person name="Gloeckner G."/>
            <person name="Rajandream M.A."/>
            <person name="Sucgang R."/>
            <person name="Berriman M."/>
            <person name="Song J."/>
            <person name="Olsen R."/>
            <person name="Szafranski K."/>
            <person name="Xu Q."/>
            <person name="Tunggal B."/>
            <person name="Kummerfeld S."/>
            <person name="Madera M."/>
            <person name="Konfortov B.A."/>
            <person name="Rivero F."/>
            <person name="Bankier A.T."/>
            <person name="Lehmann R."/>
            <person name="Hamlin N."/>
            <person name="Davies R."/>
            <person name="Gaudet P."/>
            <person name="Fey P."/>
            <person name="Pilcher K."/>
            <person name="Chen G."/>
            <person name="Saunders D."/>
            <person name="Sodergren E.J."/>
            <person name="Davis P."/>
            <person name="Kerhornou A."/>
            <person name="Nie X."/>
            <person name="Hall N."/>
            <person name="Anjard C."/>
            <person name="Hemphill L."/>
            <person name="Bason N."/>
            <person name="Farbrother P."/>
            <person name="Desany B."/>
            <person name="Just E."/>
            <person name="Morio T."/>
            <person name="Rost R."/>
            <person name="Churcher C.M."/>
            <person name="Cooper J."/>
            <person name="Haydock S."/>
            <person name="van Driessche N."/>
            <person name="Cronin A."/>
            <person name="Goodhead I."/>
            <person name="Muzny D.M."/>
            <person name="Mourier T."/>
            <person name="Pain A."/>
            <person name="Lu M."/>
            <person name="Harper D."/>
            <person name="Lindsay R."/>
            <person name="Hauser H."/>
            <person name="James K.D."/>
            <person name="Quiles M."/>
            <person name="Madan Babu M."/>
            <person name="Saito T."/>
            <person name="Buchrieser C."/>
            <person name="Wardroper A."/>
            <person name="Felder M."/>
            <person name="Thangavelu M."/>
            <person name="Johnson D."/>
            <person name="Knights A."/>
            <person name="Loulseged H."/>
            <person name="Mungall K.L."/>
            <person name="Oliver K."/>
            <person name="Price C."/>
            <person name="Quail M.A."/>
            <person name="Urushihara H."/>
            <person name="Hernandez J."/>
            <person name="Rabbinowitsch E."/>
            <person name="Steffen D."/>
            <person name="Sanders M."/>
            <person name="Ma J."/>
            <person name="Kohara Y."/>
            <person name="Sharp S."/>
            <person name="Simmonds M.N."/>
            <person name="Spiegler S."/>
            <person name="Tivey A."/>
            <person name="Sugano S."/>
            <person name="White B."/>
            <person name="Walker D."/>
            <person name="Woodward J.R."/>
            <person name="Winckler T."/>
            <person name="Tanaka Y."/>
            <person name="Shaulsky G."/>
            <person name="Schleicher M."/>
            <person name="Weinstock G.M."/>
            <person name="Rosenthal A."/>
            <person name="Cox E.C."/>
            <person name="Chisholm R.L."/>
            <person name="Gibbs R.A."/>
            <person name="Loomis W.F."/>
            <person name="Platzer M."/>
            <person name="Kay R.R."/>
            <person name="Williams J.G."/>
            <person name="Dear P.H."/>
            <person name="Noegel A.A."/>
            <person name="Barrell B.G."/>
            <person name="Kuspa A."/>
        </authorList>
    </citation>
    <scope>NUCLEOTIDE SEQUENCE [LARGE SCALE GENOMIC DNA]</scope>
    <source>
        <strain>AX4</strain>
    </source>
</reference>
<keyword id="KW-0406">Ion transport</keyword>
<keyword id="KW-0472">Membrane</keyword>
<keyword id="KW-0479">Metal-binding</keyword>
<keyword id="KW-1185">Reference proteome</keyword>
<keyword id="KW-0812">Transmembrane</keyword>
<keyword id="KW-1133">Transmembrane helix</keyword>
<keyword id="KW-0813">Transport</keyword>
<keyword id="KW-0862">Zinc</keyword>
<keyword id="KW-0864">Zinc transport</keyword>
<dbReference type="EMBL" id="AAFI02000005">
    <property type="protein sequence ID" value="EAL72016.1"/>
    <property type="molecule type" value="Genomic_DNA"/>
</dbReference>
<dbReference type="RefSeq" id="XP_645883.1">
    <property type="nucleotide sequence ID" value="XM_640791.1"/>
</dbReference>
<dbReference type="SMR" id="Q55E98"/>
<dbReference type="FunCoup" id="Q55E98">
    <property type="interactions" value="6"/>
</dbReference>
<dbReference type="STRING" id="44689.Q55E98"/>
<dbReference type="PaxDb" id="44689-DDB0266645"/>
<dbReference type="EnsemblProtists" id="EAL72016">
    <property type="protein sequence ID" value="EAL72016"/>
    <property type="gene ID" value="DDB_G0269332"/>
</dbReference>
<dbReference type="GeneID" id="8616823"/>
<dbReference type="KEGG" id="ddi:DDB_G0269332"/>
<dbReference type="dictyBase" id="DDB_G0269332">
    <property type="gene designation" value="zntC"/>
</dbReference>
<dbReference type="VEuPathDB" id="AmoebaDB:DDB_G0269332"/>
<dbReference type="eggNOG" id="KOG1484">
    <property type="taxonomic scope" value="Eukaryota"/>
</dbReference>
<dbReference type="HOGENOM" id="CLU_445120_0_0_1"/>
<dbReference type="InParanoid" id="Q55E98"/>
<dbReference type="OMA" id="EIFYGAY"/>
<dbReference type="Reactome" id="R-DDI-264876">
    <property type="pathway name" value="Insulin processing"/>
</dbReference>
<dbReference type="Reactome" id="R-DDI-435368">
    <property type="pathway name" value="Zinc efflux and compartmentalization by the SLC30 family"/>
</dbReference>
<dbReference type="PRO" id="PR:Q55E98"/>
<dbReference type="Proteomes" id="UP000002195">
    <property type="component" value="Chromosome 1"/>
</dbReference>
<dbReference type="GO" id="GO:0031410">
    <property type="term" value="C:cytoplasmic vesicle"/>
    <property type="evidence" value="ECO:0000318"/>
    <property type="project" value="GO_Central"/>
</dbReference>
<dbReference type="GO" id="GO:0005794">
    <property type="term" value="C:Golgi apparatus"/>
    <property type="evidence" value="ECO:0000314"/>
    <property type="project" value="dictyBase"/>
</dbReference>
<dbReference type="GO" id="GO:0016020">
    <property type="term" value="C:membrane"/>
    <property type="evidence" value="ECO:0007669"/>
    <property type="project" value="UniProtKB-SubCell"/>
</dbReference>
<dbReference type="GO" id="GO:0055037">
    <property type="term" value="C:recycling endosome"/>
    <property type="evidence" value="ECO:0000314"/>
    <property type="project" value="dictyBase"/>
</dbReference>
<dbReference type="GO" id="GO:0046872">
    <property type="term" value="F:metal ion binding"/>
    <property type="evidence" value="ECO:0007669"/>
    <property type="project" value="UniProtKB-KW"/>
</dbReference>
<dbReference type="GO" id="GO:0005385">
    <property type="term" value="F:zinc ion transmembrane transporter activity"/>
    <property type="evidence" value="ECO:0000318"/>
    <property type="project" value="GO_Central"/>
</dbReference>
<dbReference type="GO" id="GO:0006882">
    <property type="term" value="P:intracellular zinc ion homeostasis"/>
    <property type="evidence" value="ECO:0000318"/>
    <property type="project" value="GO_Central"/>
</dbReference>
<dbReference type="GO" id="GO:1904257">
    <property type="term" value="P:zinc ion import into Golgi lumen"/>
    <property type="evidence" value="ECO:0000318"/>
    <property type="project" value="GO_Central"/>
</dbReference>
<dbReference type="FunFam" id="1.20.1510.10:FF:000067">
    <property type="match status" value="1"/>
</dbReference>
<dbReference type="Gene3D" id="1.20.1510.10">
    <property type="entry name" value="Cation efflux protein transmembrane domain"/>
    <property type="match status" value="1"/>
</dbReference>
<dbReference type="InterPro" id="IPR002524">
    <property type="entry name" value="Cation_efflux"/>
</dbReference>
<dbReference type="InterPro" id="IPR027469">
    <property type="entry name" value="Cation_efflux_TMD_sf"/>
</dbReference>
<dbReference type="InterPro" id="IPR002395">
    <property type="entry name" value="Kininogen"/>
</dbReference>
<dbReference type="InterPro" id="IPR045316">
    <property type="entry name" value="Msc2-like"/>
</dbReference>
<dbReference type="NCBIfam" id="TIGR01297">
    <property type="entry name" value="CDF"/>
    <property type="match status" value="1"/>
</dbReference>
<dbReference type="PANTHER" id="PTHR45755">
    <property type="match status" value="1"/>
</dbReference>
<dbReference type="PANTHER" id="PTHR45755:SF2">
    <property type="entry name" value="ZINC TRANSPORTER PROTEIN DDB_G0269332-RELATED"/>
    <property type="match status" value="1"/>
</dbReference>
<dbReference type="Pfam" id="PF01545">
    <property type="entry name" value="Cation_efflux"/>
    <property type="match status" value="1"/>
</dbReference>
<dbReference type="PRINTS" id="PR00334">
    <property type="entry name" value="KININOGEN"/>
</dbReference>
<dbReference type="SUPFAM" id="SSF161111">
    <property type="entry name" value="Cation efflux protein transmembrane domain-like"/>
    <property type="match status" value="1"/>
</dbReference>
<accession>Q55E98</accession>
<name>Y9332_DICDI</name>